<reference key="1">
    <citation type="journal article" date="2010" name="BMC Genomics">
        <title>Large-scale analysis of full-length cDNAs from the tomato (Solanum lycopersicum) cultivar Micro-Tom, a reference system for the Solanaceae genomics.</title>
        <authorList>
            <person name="Aoki K."/>
            <person name="Yano K."/>
            <person name="Suzuki A."/>
            <person name="Kawamura S."/>
            <person name="Sakurai N."/>
            <person name="Suda K."/>
            <person name="Kurabayashi A."/>
            <person name="Suzuki T."/>
            <person name="Tsugane T."/>
            <person name="Watanabe M."/>
            <person name="Ooga K."/>
            <person name="Torii M."/>
            <person name="Narita T."/>
            <person name="Shin-I T."/>
            <person name="Kohara Y."/>
            <person name="Yamamoto N."/>
            <person name="Takahashi H."/>
            <person name="Watanabe Y."/>
            <person name="Egusa M."/>
            <person name="Kodama M."/>
            <person name="Ichinose Y."/>
            <person name="Kikuchi M."/>
            <person name="Fukushima S."/>
            <person name="Okabe A."/>
            <person name="Arie T."/>
            <person name="Sato Y."/>
            <person name="Yazawa K."/>
            <person name="Satoh S."/>
            <person name="Omura T."/>
            <person name="Ezura H."/>
            <person name="Shibata D."/>
        </authorList>
    </citation>
    <scope>NUCLEOTIDE SEQUENCE [LARGE SCALE MRNA]</scope>
    <source>
        <strain>cv. MicroTom</strain>
        <tissue>Fruit</tissue>
        <tissue>Leaf</tissue>
    </source>
</reference>
<reference key="2">
    <citation type="journal article" date="1992" name="Plant Mol. Biol.">
        <title>Nucleotide sequence of an osmotin-like cDNA induced in tomato during viroid infection.</title>
        <authorList>
            <person name="Ruiz-Medrano R."/>
            <person name="Jimenez-Moraila B."/>
            <person name="Herrera-Estrella L."/>
            <person name="Rivera-Bustamante R.F."/>
        </authorList>
    </citation>
    <scope>NUCLEOTIDE SEQUENCE [MRNA] OF 9-246</scope>
    <scope>INDUCTION BY VIROID</scope>
    <source>
        <strain>cv. Rio Grande</strain>
        <tissue>Leaf</tissue>
    </source>
</reference>
<reference key="3">
    <citation type="journal article" date="1993" name="Plant Physiol.">
        <title>cDNA cloning of viroid-induced tomato pathogenesis-related protein P23. Characterization as a vacuolar antifungal factor.</title>
        <authorList>
            <person name="Rodrigo I."/>
            <person name="Vera P."/>
            <person name="Tornero P."/>
            <person name="Hernandez-Yago J."/>
            <person name="Conejero V."/>
        </authorList>
    </citation>
    <scope>NUCLEOTIDE SEQUENCE [MRNA] OF 9-246</scope>
    <scope>FUNCTION</scope>
    <scope>SUBCELLULAR LOCATION</scope>
    <scope>INDUCTION BY VIROID AND ETHYLENE</scope>
    <source>
        <strain>cv. Rutgers</strain>
        <tissue>Leaf</tissue>
    </source>
</reference>
<reference key="4">
    <citation type="journal article" date="2019" name="PLoS ONE">
        <title>Plasma activated water as resistance inducer against bacterial leaf spot of tomato.</title>
        <authorList>
            <person name="Perez S.M."/>
            <person name="Biondi E."/>
            <person name="Laurita R."/>
            <person name="Proto M."/>
            <person name="Sarti F."/>
            <person name="Gherardi M."/>
            <person name="Bertaccini A."/>
            <person name="Colombo V."/>
        </authorList>
    </citation>
    <scope>NUCLEOTIDE SEQUENCE [MRNA] OF 17-202</scope>
    <scope>INDUCTION BY JASMONIC ACID AND ACIBENZOLAR-S-METHYL</scope>
    <source>
        <strain>cv. Moneymaker</strain>
        <tissue>Leaf</tissue>
    </source>
</reference>
<keyword id="KW-0929">Antimicrobial</keyword>
<keyword id="KW-1015">Disulfide bond</keyword>
<keyword id="KW-0295">Fungicide</keyword>
<keyword id="KW-0326">Glycosidase</keyword>
<keyword id="KW-0378">Hydrolase</keyword>
<keyword id="KW-0568">Pathogenesis-related protein</keyword>
<keyword id="KW-0611">Plant defense</keyword>
<keyword id="KW-1185">Reference proteome</keyword>
<keyword id="KW-0732">Signal</keyword>
<keyword id="KW-0926">Vacuole</keyword>
<proteinExistence type="evidence at transcript level"/>
<protein>
    <recommendedName>
        <fullName evidence="7 8">Osmotin-like protein TPM-1</fullName>
    </recommendedName>
    <alternativeName>
        <fullName evidence="9">Pathogenesis-related protein PR P23</fullName>
        <shortName evidence="9">23 kDa pathogenesis-related protein</shortName>
    </alternativeName>
    <alternativeName>
        <fullName evidence="1">Probable endo-beta-1,3-D-glucanase TPM-1</fullName>
        <ecNumber evidence="1">3.2.1.6</ecNumber>
    </alternativeName>
    <alternativeName>
        <fullName evidence="8">Thaumatin-like protein 5</fullName>
    </alternativeName>
</protein>
<feature type="signal peptide" evidence="2">
    <location>
        <begin position="1"/>
        <end position="21"/>
    </location>
</feature>
<feature type="chain" id="PRO_0000034045" description="Osmotin-like protein TPM-1">
    <location>
        <begin position="22"/>
        <end position="246"/>
    </location>
</feature>
<feature type="disulfide bond" evidence="3">
    <location>
        <begin position="30"/>
        <end position="225"/>
    </location>
</feature>
<feature type="disulfide bond" evidence="3">
    <location>
        <begin position="72"/>
        <end position="82"/>
    </location>
</feature>
<feature type="disulfide bond" evidence="3">
    <location>
        <begin position="87"/>
        <end position="93"/>
    </location>
</feature>
<feature type="disulfide bond" evidence="3">
    <location>
        <begin position="141"/>
        <end position="213"/>
    </location>
</feature>
<feature type="disulfide bond" evidence="3">
    <location>
        <begin position="146"/>
        <end position="196"/>
    </location>
</feature>
<feature type="disulfide bond" evidence="3">
    <location>
        <begin position="154"/>
        <end position="164"/>
    </location>
</feature>
<feature type="disulfide bond" evidence="3">
    <location>
        <begin position="168"/>
        <end position="177"/>
    </location>
</feature>
<feature type="disulfide bond" evidence="3">
    <location>
        <begin position="178"/>
        <end position="183"/>
    </location>
</feature>
<feature type="sequence conflict" description="In Ref. 3; CAA50059." evidence="10" ref="3">
    <original>V</original>
    <variation>F</variation>
    <location>
        <position position="9"/>
    </location>
</feature>
<feature type="sequence conflict" description="In Ref. 3; CAA50059, 1; AK322366 and 4; ATG24057." evidence="10" ref="3 1 4">
    <original>D</original>
    <variation>A</variation>
    <location>
        <position position="77"/>
    </location>
</feature>
<comment type="function">
    <text evidence="1 6">Antifungal protein that inhibits the growth of several phytopathogenic fungi (e.g. Trichothecium roseum, Fusarium oxysporum, Phytophthora citrophthora and Colletotrichum coccodes) (PubMed:8278538). May bind to beta-glucans and have beta-1,3-D-glucanase activity (By similarity).</text>
</comment>
<comment type="catalytic activity">
    <reaction evidence="1">
        <text>Endohydrolysis of (1-&gt;3)- or (1-&gt;4)-linkages in beta-D-glucans when the glucose residue whose reducing group is involved in the linkage to be hydrolyzed is itself substituted at C-3.</text>
        <dbReference type="EC" id="3.2.1.6"/>
    </reaction>
</comment>
<comment type="subcellular location">
    <subcellularLocation>
        <location evidence="6">Vacuole</location>
    </subcellularLocation>
    <text evidence="6">Accumulates in vacuoles associated to dense inclusion bodies.</text>
</comment>
<comment type="induction">
    <text evidence="4 5 6">By viroid infection (tomato planta macho virus TPMV) (PubMed:1463856, PubMed:8278538). Triggered by ethylene (PubMed:8278538). Accumulates in response to jasmonic acid (JA) and acibenzolar-S-methyl (ASM) treatments (PubMed:31150501).</text>
</comment>
<comment type="similarity">
    <text evidence="3">Belongs to the thaumatin family.</text>
</comment>
<name>TPM1_SOLLC</name>
<accession>Q01591</accession>
<accession>A0A291EWT8</accession>
<sequence length="246" mass="26748">MAYLRSSFVFFLLAFVTYTYAATFEVRNNCPYTVWAASTPIGGGRRLDRGQTWVINAPRGTKMARIWGRTNCNFDGDGRGSCQTGDCGGVLQCTGWGKPPNTLAEYALDQFSNLDFWDISLVDGFNIPMTFAPTNPSGGKCHAIHCTANINGECPGSLRVPGGCNNPCTTFGGQQYCCTQGPCGPTDLSRFFKQRCPDAYSYPQDDPTSTFTCPSGSTNYRVVFCPNGVTSPNFPLEMPSSDEEAK</sequence>
<evidence type="ECO:0000250" key="1">
    <source>
        <dbReference type="UniProtKB" id="P12670"/>
    </source>
</evidence>
<evidence type="ECO:0000255" key="2"/>
<evidence type="ECO:0000255" key="3">
    <source>
        <dbReference type="PROSITE-ProRule" id="PRU00699"/>
    </source>
</evidence>
<evidence type="ECO:0000269" key="4">
    <source>
    </source>
</evidence>
<evidence type="ECO:0000269" key="5">
    <source>
    </source>
</evidence>
<evidence type="ECO:0000269" key="6">
    <source>
    </source>
</evidence>
<evidence type="ECO:0000303" key="7">
    <source>
    </source>
</evidence>
<evidence type="ECO:0000303" key="8">
    <source>
    </source>
</evidence>
<evidence type="ECO:0000303" key="9">
    <source>
    </source>
</evidence>
<evidence type="ECO:0000305" key="10"/>
<gene>
    <name evidence="7 8" type="primary">TPM-1</name>
    <name evidence="8" type="synonym">PR5</name>
</gene>
<dbReference type="EC" id="3.2.1.6" evidence="1"/>
<dbReference type="EMBL" id="AK246856">
    <property type="status" value="NOT_ANNOTATED_CDS"/>
    <property type="molecule type" value="mRNA"/>
</dbReference>
<dbReference type="EMBL" id="AK322366">
    <property type="status" value="NOT_ANNOTATED_CDS"/>
    <property type="molecule type" value="mRNA"/>
</dbReference>
<dbReference type="EMBL" id="X66416">
    <property type="protein sequence ID" value="CAA47047.1"/>
    <property type="molecule type" value="mRNA"/>
</dbReference>
<dbReference type="EMBL" id="X70787">
    <property type="protein sequence ID" value="CAA50059.1"/>
    <property type="molecule type" value="mRNA"/>
</dbReference>
<dbReference type="EMBL" id="KY609513">
    <property type="protein sequence ID" value="ATG24057.1"/>
    <property type="molecule type" value="mRNA"/>
</dbReference>
<dbReference type="PIR" id="PQ0742">
    <property type="entry name" value="S31829"/>
</dbReference>
<dbReference type="PIR" id="S28001">
    <property type="entry name" value="S28001"/>
</dbReference>
<dbReference type="SMR" id="Q01591"/>
<dbReference type="FunCoup" id="Q01591">
    <property type="interactions" value="43"/>
</dbReference>
<dbReference type="STRING" id="4081.Q01591"/>
<dbReference type="Allergome" id="9063">
    <property type="allergen name" value="Sola l TLP"/>
</dbReference>
<dbReference type="PaxDb" id="4081-Solyc08g080650.1.1"/>
<dbReference type="eggNOG" id="ENOG502QV4N">
    <property type="taxonomic scope" value="Eukaryota"/>
</dbReference>
<dbReference type="InParanoid" id="Q01591"/>
<dbReference type="Proteomes" id="UP000004994">
    <property type="component" value="Unplaced"/>
</dbReference>
<dbReference type="ExpressionAtlas" id="Q01591">
    <property type="expression patterns" value="baseline and differential"/>
</dbReference>
<dbReference type="GO" id="GO:0005773">
    <property type="term" value="C:vacuole"/>
    <property type="evidence" value="ECO:0000314"/>
    <property type="project" value="UniProtKB"/>
</dbReference>
<dbReference type="GO" id="GO:0052736">
    <property type="term" value="F:beta-glucanase activity"/>
    <property type="evidence" value="ECO:0000250"/>
    <property type="project" value="UniProtKB"/>
</dbReference>
<dbReference type="GO" id="GO:0061760">
    <property type="term" value="P:antifungal innate immune response"/>
    <property type="evidence" value="ECO:0000314"/>
    <property type="project" value="UniProtKB"/>
</dbReference>
<dbReference type="GO" id="GO:0006952">
    <property type="term" value="P:defense response"/>
    <property type="evidence" value="ECO:0000318"/>
    <property type="project" value="GO_Central"/>
</dbReference>
<dbReference type="GO" id="GO:0050832">
    <property type="term" value="P:defense response to fungus"/>
    <property type="evidence" value="ECO:0000314"/>
    <property type="project" value="UniProtKB"/>
</dbReference>
<dbReference type="GO" id="GO:0031640">
    <property type="term" value="P:killing of cells of another organism"/>
    <property type="evidence" value="ECO:0007669"/>
    <property type="project" value="UniProtKB-KW"/>
</dbReference>
<dbReference type="GO" id="GO:0009723">
    <property type="term" value="P:response to ethylene"/>
    <property type="evidence" value="ECO:0000270"/>
    <property type="project" value="UniProtKB"/>
</dbReference>
<dbReference type="GO" id="GO:0009753">
    <property type="term" value="P:response to jasmonic acid"/>
    <property type="evidence" value="ECO:0000270"/>
    <property type="project" value="UniProtKB"/>
</dbReference>
<dbReference type="GO" id="GO:0009615">
    <property type="term" value="P:response to virus"/>
    <property type="evidence" value="ECO:0000270"/>
    <property type="project" value="UniProtKB"/>
</dbReference>
<dbReference type="CDD" id="cd09217">
    <property type="entry name" value="TLP-P"/>
    <property type="match status" value="1"/>
</dbReference>
<dbReference type="FunFam" id="2.60.110.10:FF:000003">
    <property type="entry name" value="Thaumatin I"/>
    <property type="match status" value="1"/>
</dbReference>
<dbReference type="Gene3D" id="2.60.110.10">
    <property type="entry name" value="Thaumatin"/>
    <property type="match status" value="1"/>
</dbReference>
<dbReference type="InterPro" id="IPR037176">
    <property type="entry name" value="Osmotin/thaumatin-like_sf"/>
</dbReference>
<dbReference type="InterPro" id="IPR001938">
    <property type="entry name" value="Thaumatin"/>
</dbReference>
<dbReference type="InterPro" id="IPR017949">
    <property type="entry name" value="Thaumatin_CS"/>
</dbReference>
<dbReference type="PANTHER" id="PTHR31048">
    <property type="entry name" value="OS03G0233200 PROTEIN"/>
    <property type="match status" value="1"/>
</dbReference>
<dbReference type="Pfam" id="PF00314">
    <property type="entry name" value="Thaumatin"/>
    <property type="match status" value="1"/>
</dbReference>
<dbReference type="PIRSF" id="PIRSF002703">
    <property type="entry name" value="Thaumatin"/>
    <property type="match status" value="1"/>
</dbReference>
<dbReference type="PRINTS" id="PR00347">
    <property type="entry name" value="THAUMATIN"/>
</dbReference>
<dbReference type="SMART" id="SM00205">
    <property type="entry name" value="THN"/>
    <property type="match status" value="1"/>
</dbReference>
<dbReference type="SUPFAM" id="SSF49870">
    <property type="entry name" value="Osmotin, thaumatin-like protein"/>
    <property type="match status" value="1"/>
</dbReference>
<dbReference type="PROSITE" id="PS00316">
    <property type="entry name" value="THAUMATIN_1"/>
    <property type="match status" value="1"/>
</dbReference>
<dbReference type="PROSITE" id="PS51367">
    <property type="entry name" value="THAUMATIN_2"/>
    <property type="match status" value="1"/>
</dbReference>
<organism>
    <name type="scientific">Solanum lycopersicum</name>
    <name type="common">Tomato</name>
    <name type="synonym">Lycopersicon esculentum</name>
    <dbReference type="NCBI Taxonomy" id="4081"/>
    <lineage>
        <taxon>Eukaryota</taxon>
        <taxon>Viridiplantae</taxon>
        <taxon>Streptophyta</taxon>
        <taxon>Embryophyta</taxon>
        <taxon>Tracheophyta</taxon>
        <taxon>Spermatophyta</taxon>
        <taxon>Magnoliopsida</taxon>
        <taxon>eudicotyledons</taxon>
        <taxon>Gunneridae</taxon>
        <taxon>Pentapetalae</taxon>
        <taxon>asterids</taxon>
        <taxon>lamiids</taxon>
        <taxon>Solanales</taxon>
        <taxon>Solanaceae</taxon>
        <taxon>Solanoideae</taxon>
        <taxon>Solaneae</taxon>
        <taxon>Solanum</taxon>
        <taxon>Solanum subgen. Lycopersicon</taxon>
    </lineage>
</organism>